<keyword id="KW-0002">3D-structure</keyword>
<keyword id="KW-1003">Cell membrane</keyword>
<keyword id="KW-1015">Disulfide bond</keyword>
<keyword id="KW-0325">Glycoprotein</keyword>
<keyword id="KW-0407">Ion channel</keyword>
<keyword id="KW-0406">Ion transport</keyword>
<keyword id="KW-1071">Ligand-gated ion channel</keyword>
<keyword id="KW-0472">Membrane</keyword>
<keyword id="KW-0628">Postsynaptic cell membrane</keyword>
<keyword id="KW-0675">Receptor</keyword>
<keyword id="KW-1185">Reference proteome</keyword>
<keyword id="KW-0732">Signal</keyword>
<keyword id="KW-0770">Synapse</keyword>
<keyword id="KW-0812">Transmembrane</keyword>
<keyword id="KW-1133">Transmembrane helix</keyword>
<keyword id="KW-0813">Transport</keyword>
<evidence type="ECO:0000250" key="1"/>
<evidence type="ECO:0000250" key="2">
    <source>
        <dbReference type="UniProtKB" id="P02708"/>
    </source>
</evidence>
<evidence type="ECO:0000255" key="3"/>
<evidence type="ECO:0000269" key="4">
    <source>
    </source>
</evidence>
<evidence type="ECO:0000305" key="5"/>
<evidence type="ECO:0007829" key="6">
    <source>
        <dbReference type="PDB" id="9AVU"/>
    </source>
</evidence>
<evidence type="ECO:0007829" key="7">
    <source>
        <dbReference type="PDB" id="9AVV"/>
    </source>
</evidence>
<evidence type="ECO:0007829" key="8">
    <source>
        <dbReference type="PDB" id="9AWK"/>
    </source>
</evidence>
<gene>
    <name type="primary">CHRNA1</name>
</gene>
<accession>P02709</accession>
<comment type="function">
    <text evidence="4">Upon acetylcholine binding, the AChR responds by an extensive change in conformation that affects all subunits and leads to opening of an ion-conducting channel across the plasma membrane.</text>
</comment>
<comment type="catalytic activity">
    <reaction evidence="4">
        <text>K(+)(in) = K(+)(out)</text>
        <dbReference type="Rhea" id="RHEA:29463"/>
        <dbReference type="ChEBI" id="CHEBI:29103"/>
    </reaction>
</comment>
<comment type="catalytic activity">
    <reaction evidence="4">
        <text>Na(+)(in) = Na(+)(out)</text>
        <dbReference type="Rhea" id="RHEA:34963"/>
        <dbReference type="ChEBI" id="CHEBI:29101"/>
    </reaction>
</comment>
<comment type="subunit">
    <text evidence="2 4">One of the alpha chains that assemble within the acetylcholine receptor, a pentamer of two alpha chains, a beta, a delta, and a gamma (in immature muscle) or epsilon (in mature muscle) chains (PubMed:2423878). The muscle heteropentamer composed of alpha-1, beta-1, delta, epsilon subunits interacts with the alpha-conotoxin ImII.</text>
</comment>
<comment type="subcellular location">
    <subcellularLocation>
        <location evidence="2">Postsynaptic cell membrane</location>
        <topology evidence="3">Multi-pass membrane protein</topology>
    </subcellularLocation>
    <subcellularLocation>
        <location evidence="2">Cell membrane</location>
        <topology evidence="3">Multi-pass membrane protein</topology>
    </subcellularLocation>
</comment>
<comment type="similarity">
    <text evidence="5">Belongs to the ligand-gated ion channel (TC 1.A.9) family. Acetylcholine receptor (TC 1.A.9.1) subfamily. Alpha-1/CHRNA1 sub-subfamily.</text>
</comment>
<proteinExistence type="evidence at protein level"/>
<dbReference type="EMBL" id="X02509">
    <property type="protein sequence ID" value="CAA26345.1"/>
    <property type="molecule type" value="mRNA"/>
</dbReference>
<dbReference type="PIR" id="A03169">
    <property type="entry name" value="ACBOA1"/>
</dbReference>
<dbReference type="RefSeq" id="NP_788837.1">
    <property type="nucleotide sequence ID" value="NM_176664.2"/>
</dbReference>
<dbReference type="PDB" id="9AVU">
    <property type="method" value="EM"/>
    <property type="resolution" value="2.45 A"/>
    <property type="chains" value="A/C=21-457"/>
</dbReference>
<dbReference type="PDB" id="9AVV">
    <property type="method" value="EM"/>
    <property type="resolution" value="2.09 A"/>
    <property type="chains" value="A/C=21-457"/>
</dbReference>
<dbReference type="PDB" id="9AWJ">
    <property type="method" value="EM"/>
    <property type="resolution" value="2.45 A"/>
    <property type="chains" value="A/C=21-457"/>
</dbReference>
<dbReference type="PDB" id="9AWK">
    <property type="method" value="EM"/>
    <property type="resolution" value="2.14 A"/>
    <property type="chains" value="A/C=21-457"/>
</dbReference>
<dbReference type="PDBsum" id="9AVU"/>
<dbReference type="PDBsum" id="9AVV"/>
<dbReference type="PDBsum" id="9AWJ"/>
<dbReference type="PDBsum" id="9AWK"/>
<dbReference type="EMDB" id="EMD-43923"/>
<dbReference type="EMDB" id="EMD-43924"/>
<dbReference type="EMDB" id="EMD-43925"/>
<dbReference type="EMDB" id="EMD-43926"/>
<dbReference type="SMR" id="P02709"/>
<dbReference type="CORUM" id="P02709"/>
<dbReference type="FunCoup" id="P02709">
    <property type="interactions" value="58"/>
</dbReference>
<dbReference type="STRING" id="9913.ENSBTAP00000024298"/>
<dbReference type="GlyCosmos" id="P02709">
    <property type="glycosylation" value="1 site, No reported glycans"/>
</dbReference>
<dbReference type="GlyGen" id="P02709">
    <property type="glycosylation" value="1 site"/>
</dbReference>
<dbReference type="PaxDb" id="9913-ENSBTAP00000024298"/>
<dbReference type="GeneID" id="338070"/>
<dbReference type="KEGG" id="bta:338070"/>
<dbReference type="CTD" id="1134"/>
<dbReference type="VEuPathDB" id="HostDB:ENSBTAG00000018253"/>
<dbReference type="eggNOG" id="KOG3645">
    <property type="taxonomic scope" value="Eukaryota"/>
</dbReference>
<dbReference type="HOGENOM" id="CLU_018074_1_2_1"/>
<dbReference type="InParanoid" id="P02709"/>
<dbReference type="OMA" id="GHITWNP"/>
<dbReference type="OrthoDB" id="5975154at2759"/>
<dbReference type="TreeFam" id="TF315605"/>
<dbReference type="Reactome" id="R-BTA-629594">
    <property type="pathway name" value="Highly calcium permeable postsynaptic nicotinic acetylcholine receptors"/>
</dbReference>
<dbReference type="Reactome" id="R-BTA-629597">
    <property type="pathway name" value="Highly calcium permeable nicotinic acetylcholine receptors"/>
</dbReference>
<dbReference type="Proteomes" id="UP000009136">
    <property type="component" value="Chromosome 2"/>
</dbReference>
<dbReference type="Bgee" id="ENSBTAG00000018253">
    <property type="expression patterns" value="Expressed in corpus luteum and 43 other cell types or tissues"/>
</dbReference>
<dbReference type="GO" id="GO:0005892">
    <property type="term" value="C:acetylcholine-gated channel complex"/>
    <property type="evidence" value="ECO:0000318"/>
    <property type="project" value="GO_Central"/>
</dbReference>
<dbReference type="GO" id="GO:0043005">
    <property type="term" value="C:neuron projection"/>
    <property type="evidence" value="ECO:0000318"/>
    <property type="project" value="GO_Central"/>
</dbReference>
<dbReference type="GO" id="GO:0005886">
    <property type="term" value="C:plasma membrane"/>
    <property type="evidence" value="ECO:0000318"/>
    <property type="project" value="GO_Central"/>
</dbReference>
<dbReference type="GO" id="GO:0045211">
    <property type="term" value="C:postsynaptic membrane"/>
    <property type="evidence" value="ECO:0007669"/>
    <property type="project" value="UniProtKB-SubCell"/>
</dbReference>
<dbReference type="GO" id="GO:0045202">
    <property type="term" value="C:synapse"/>
    <property type="evidence" value="ECO:0000318"/>
    <property type="project" value="GO_Central"/>
</dbReference>
<dbReference type="GO" id="GO:0022848">
    <property type="term" value="F:acetylcholine-gated monoatomic cation-selective channel activity"/>
    <property type="evidence" value="ECO:0007669"/>
    <property type="project" value="InterPro"/>
</dbReference>
<dbReference type="GO" id="GO:0005231">
    <property type="term" value="F:excitatory extracellular ligand-gated monoatomic ion channel activity"/>
    <property type="evidence" value="ECO:0000318"/>
    <property type="project" value="GO_Central"/>
</dbReference>
<dbReference type="GO" id="GO:0004888">
    <property type="term" value="F:transmembrane signaling receptor activity"/>
    <property type="evidence" value="ECO:0007669"/>
    <property type="project" value="InterPro"/>
</dbReference>
<dbReference type="GO" id="GO:1904315">
    <property type="term" value="F:transmitter-gated monoatomic ion channel activity involved in regulation of postsynaptic membrane potential"/>
    <property type="evidence" value="ECO:0000318"/>
    <property type="project" value="GO_Central"/>
</dbReference>
<dbReference type="GO" id="GO:0095500">
    <property type="term" value="P:acetylcholine receptor signaling pathway"/>
    <property type="evidence" value="ECO:0000318"/>
    <property type="project" value="GO_Central"/>
</dbReference>
<dbReference type="GO" id="GO:0051899">
    <property type="term" value="P:membrane depolarization"/>
    <property type="evidence" value="ECO:0000318"/>
    <property type="project" value="GO_Central"/>
</dbReference>
<dbReference type="GO" id="GO:0034220">
    <property type="term" value="P:monoatomic ion transmembrane transport"/>
    <property type="evidence" value="ECO:0000318"/>
    <property type="project" value="GO_Central"/>
</dbReference>
<dbReference type="GO" id="GO:0007274">
    <property type="term" value="P:neuromuscular synaptic transmission"/>
    <property type="evidence" value="ECO:0000318"/>
    <property type="project" value="GO_Central"/>
</dbReference>
<dbReference type="GO" id="GO:0035094">
    <property type="term" value="P:response to nicotine"/>
    <property type="evidence" value="ECO:0000318"/>
    <property type="project" value="GO_Central"/>
</dbReference>
<dbReference type="GO" id="GO:0007271">
    <property type="term" value="P:synaptic transmission, cholinergic"/>
    <property type="evidence" value="ECO:0000318"/>
    <property type="project" value="GO_Central"/>
</dbReference>
<dbReference type="CDD" id="cd19014">
    <property type="entry name" value="LGIC_ECD_nAChR_A1"/>
    <property type="match status" value="1"/>
</dbReference>
<dbReference type="CDD" id="cd19064">
    <property type="entry name" value="LGIC_TM_nAChR"/>
    <property type="match status" value="1"/>
</dbReference>
<dbReference type="FunFam" id="1.20.58.390:FF:000013">
    <property type="entry name" value="Putative acetylcholine receptor subunit alpha"/>
    <property type="match status" value="1"/>
</dbReference>
<dbReference type="FunFam" id="1.20.58.390:FF:000016">
    <property type="entry name" value="Putative acetylcholine receptor subunit alpha"/>
    <property type="match status" value="1"/>
</dbReference>
<dbReference type="FunFam" id="2.70.170.10:FF:000019">
    <property type="entry name" value="Putative acetylcholine receptor subunit alpha"/>
    <property type="match status" value="1"/>
</dbReference>
<dbReference type="Gene3D" id="2.70.170.10">
    <property type="entry name" value="Neurotransmitter-gated ion-channel ligand-binding domain"/>
    <property type="match status" value="1"/>
</dbReference>
<dbReference type="Gene3D" id="1.20.58.390">
    <property type="entry name" value="Neurotransmitter-gated ion-channel transmembrane domain"/>
    <property type="match status" value="2"/>
</dbReference>
<dbReference type="InterPro" id="IPR006202">
    <property type="entry name" value="Neur_chan_lig-bd"/>
</dbReference>
<dbReference type="InterPro" id="IPR036734">
    <property type="entry name" value="Neur_chan_lig-bd_sf"/>
</dbReference>
<dbReference type="InterPro" id="IPR006201">
    <property type="entry name" value="Neur_channel"/>
</dbReference>
<dbReference type="InterPro" id="IPR036719">
    <property type="entry name" value="Neuro-gated_channel_TM_sf"/>
</dbReference>
<dbReference type="InterPro" id="IPR038050">
    <property type="entry name" value="Neuro_actylchol_rec"/>
</dbReference>
<dbReference type="InterPro" id="IPR006029">
    <property type="entry name" value="Neurotrans-gated_channel_TM"/>
</dbReference>
<dbReference type="InterPro" id="IPR018000">
    <property type="entry name" value="Neurotransmitter_ion_chnl_CS"/>
</dbReference>
<dbReference type="InterPro" id="IPR002394">
    <property type="entry name" value="Nicotinic_acetylcholine_rcpt"/>
</dbReference>
<dbReference type="NCBIfam" id="TIGR00860">
    <property type="entry name" value="LIC"/>
    <property type="match status" value="1"/>
</dbReference>
<dbReference type="PANTHER" id="PTHR18945">
    <property type="entry name" value="NEUROTRANSMITTER GATED ION CHANNEL"/>
    <property type="match status" value="1"/>
</dbReference>
<dbReference type="Pfam" id="PF02931">
    <property type="entry name" value="Neur_chan_LBD"/>
    <property type="match status" value="1"/>
</dbReference>
<dbReference type="Pfam" id="PF02932">
    <property type="entry name" value="Neur_chan_memb"/>
    <property type="match status" value="1"/>
</dbReference>
<dbReference type="PRINTS" id="PR00254">
    <property type="entry name" value="NICOTINICR"/>
</dbReference>
<dbReference type="PRINTS" id="PR00252">
    <property type="entry name" value="NRIONCHANNEL"/>
</dbReference>
<dbReference type="SUPFAM" id="SSF90112">
    <property type="entry name" value="Neurotransmitter-gated ion-channel transmembrane pore"/>
    <property type="match status" value="1"/>
</dbReference>
<dbReference type="SUPFAM" id="SSF63712">
    <property type="entry name" value="Nicotinic receptor ligand binding domain-like"/>
    <property type="match status" value="1"/>
</dbReference>
<dbReference type="PROSITE" id="PS00236">
    <property type="entry name" value="NEUROTR_ION_CHANNEL"/>
    <property type="match status" value="1"/>
</dbReference>
<reference key="1">
    <citation type="journal article" date="1983" name="Nature">
        <title>Cloning and sequence analysis of calf cDNA and human genomic DNA encoding alpha-subunit precursor of muscle acetylcholine receptor.</title>
        <authorList>
            <person name="Noda M."/>
            <person name="Furutani Y."/>
            <person name="Takahashi H."/>
            <person name="Toyosato M."/>
            <person name="Tanabe T."/>
            <person name="Shimizu S."/>
            <person name="Kikyotani S."/>
            <person name="Kayano T."/>
            <person name="Hirose T."/>
            <person name="Inayama S."/>
            <person name="Numa S."/>
        </authorList>
    </citation>
    <scope>NUCLEOTIDE SEQUENCE [MRNA]</scope>
</reference>
<reference key="2">
    <citation type="journal article" date="1986" name="Nature">
        <title>Molecular distinction between fetal and adult forms of muscle acetylcholine receptor.</title>
        <authorList>
            <person name="Mishina M."/>
            <person name="Takai T."/>
            <person name="Imoto K."/>
            <person name="Noda M."/>
            <person name="Takahashi T."/>
            <person name="Numa S."/>
            <person name="Methfessel C."/>
            <person name="Sakmann B."/>
        </authorList>
    </citation>
    <scope>FUNCTION</scope>
    <scope>TRANSPORTER ACTIVITY</scope>
    <scope>SUBUNIT</scope>
</reference>
<organism>
    <name type="scientific">Bos taurus</name>
    <name type="common">Bovine</name>
    <dbReference type="NCBI Taxonomy" id="9913"/>
    <lineage>
        <taxon>Eukaryota</taxon>
        <taxon>Metazoa</taxon>
        <taxon>Chordata</taxon>
        <taxon>Craniata</taxon>
        <taxon>Vertebrata</taxon>
        <taxon>Euteleostomi</taxon>
        <taxon>Mammalia</taxon>
        <taxon>Eutheria</taxon>
        <taxon>Laurasiatheria</taxon>
        <taxon>Artiodactyla</taxon>
        <taxon>Ruminantia</taxon>
        <taxon>Pecora</taxon>
        <taxon>Bovidae</taxon>
        <taxon>Bovinae</taxon>
        <taxon>Bos</taxon>
    </lineage>
</organism>
<name>ACHA_BOVIN</name>
<protein>
    <recommendedName>
        <fullName>Acetylcholine receptor subunit alpha</fullName>
    </recommendedName>
</protein>
<sequence length="457" mass="51948">MEPRPLLLLLGLCSAGLVLGSEHETRLVAKLFEDYNSVVRPVEDHRQAVEVTVGLQLIQLINVDEVNQIVTTNVRLKQQWVDYNLKWNPDDYGGVKKIHIPSEKIWRPDLVLYNNADGDFAIVKFTKVLLDYTGHITWTPPAIFKSYCEIIVTHFPFDEQNCSMKLGTWTYDGSVVVINPESDQPDLSNFMESGEWVIKESRGWKHWVFYACCPSTPYLDITYHFVMQRLPLYFIVNVIIPCLLFSFLTGLVFYLPTDSGEKMTLSISVLLSLTVFLLVIVELIPSTSSAVPLIGKYMLFTMVFVIASIIITVIVINTHHRSPSTHVMPEWVRKVFIDTIPNIMFFSTMKRPSREKQDKKIFTEDIDISDISGKPGPPPMGFHSPLIKHPEVKSAIEGIKYIAETMKSDQESNNAAEEWKYVAMVMDHILLAVFMLVCIIGTLAVFAGRLIELNQQG</sequence>
<feature type="signal peptide">
    <location>
        <begin position="1"/>
        <end position="20"/>
    </location>
</feature>
<feature type="chain" id="PRO_0000000304" description="Acetylcholine receptor subunit alpha">
    <location>
        <begin position="21"/>
        <end position="457"/>
    </location>
</feature>
<feature type="topological domain" description="Extracellular">
    <location>
        <begin position="21"/>
        <end position="230"/>
    </location>
</feature>
<feature type="transmembrane region" description="Helical">
    <location>
        <begin position="231"/>
        <end position="255"/>
    </location>
</feature>
<feature type="transmembrane region" description="Helical">
    <location>
        <begin position="263"/>
        <end position="281"/>
    </location>
</feature>
<feature type="transmembrane region" description="Helical">
    <location>
        <begin position="297"/>
        <end position="316"/>
    </location>
</feature>
<feature type="topological domain" description="Cytoplasmic">
    <location>
        <begin position="317"/>
        <end position="428"/>
    </location>
</feature>
<feature type="transmembrane region" description="Helical">
    <location>
        <begin position="429"/>
        <end position="447"/>
    </location>
</feature>
<feature type="glycosylation site" description="N-linked (GlcNAc...) asparagine" evidence="3">
    <location>
        <position position="161"/>
    </location>
</feature>
<feature type="disulfide bond" evidence="1">
    <location>
        <begin position="148"/>
        <end position="162"/>
    </location>
</feature>
<feature type="disulfide bond" description="Associated with receptor activation" evidence="1">
    <location>
        <begin position="212"/>
        <end position="213"/>
    </location>
</feature>
<feature type="helix" evidence="7">
    <location>
        <begin position="22"/>
        <end position="31"/>
    </location>
</feature>
<feature type="strand" evidence="7">
    <location>
        <begin position="37"/>
        <end position="39"/>
    </location>
</feature>
<feature type="strand" evidence="7">
    <location>
        <begin position="49"/>
        <end position="64"/>
    </location>
</feature>
<feature type="turn" evidence="7">
    <location>
        <begin position="65"/>
        <end position="68"/>
    </location>
</feature>
<feature type="strand" evidence="7">
    <location>
        <begin position="69"/>
        <end position="86"/>
    </location>
</feature>
<feature type="helix" evidence="7">
    <location>
        <begin position="89"/>
        <end position="92"/>
    </location>
</feature>
<feature type="strand" evidence="7">
    <location>
        <begin position="97"/>
        <end position="100"/>
    </location>
</feature>
<feature type="helix" evidence="8">
    <location>
        <begin position="102"/>
        <end position="104"/>
    </location>
</feature>
<feature type="strand" evidence="7">
    <location>
        <begin position="110"/>
        <end position="112"/>
    </location>
</feature>
<feature type="strand" evidence="6">
    <location>
        <begin position="115"/>
        <end position="118"/>
    </location>
</feature>
<feature type="strand" evidence="7">
    <location>
        <begin position="128"/>
        <end position="131"/>
    </location>
</feature>
<feature type="strand" evidence="7">
    <location>
        <begin position="133"/>
        <end position="138"/>
    </location>
</feature>
<feature type="strand" evidence="7">
    <location>
        <begin position="141"/>
        <end position="147"/>
    </location>
</feature>
<feature type="turn" evidence="7">
    <location>
        <begin position="153"/>
        <end position="156"/>
    </location>
</feature>
<feature type="strand" evidence="7">
    <location>
        <begin position="159"/>
        <end position="170"/>
    </location>
</feature>
<feature type="turn" evidence="7">
    <location>
        <begin position="173"/>
        <end position="175"/>
    </location>
</feature>
<feature type="strand" evidence="7">
    <location>
        <begin position="176"/>
        <end position="181"/>
    </location>
</feature>
<feature type="strand" evidence="7">
    <location>
        <begin position="194"/>
        <end position="208"/>
    </location>
</feature>
<feature type="strand" evidence="6">
    <location>
        <begin position="211"/>
        <end position="213"/>
    </location>
</feature>
<feature type="strand" evidence="7">
    <location>
        <begin position="218"/>
        <end position="229"/>
    </location>
</feature>
<feature type="helix" evidence="7">
    <location>
        <begin position="232"/>
        <end position="237"/>
    </location>
</feature>
<feature type="helix" evidence="7">
    <location>
        <begin position="239"/>
        <end position="247"/>
    </location>
</feature>
<feature type="helix" evidence="7">
    <location>
        <begin position="250"/>
        <end position="254"/>
    </location>
</feature>
<feature type="helix" evidence="7">
    <location>
        <begin position="257"/>
        <end position="259"/>
    </location>
</feature>
<feature type="helix" evidence="7">
    <location>
        <begin position="262"/>
        <end position="283"/>
    </location>
</feature>
<feature type="helix" evidence="7">
    <location>
        <begin position="293"/>
        <end position="319"/>
    </location>
</feature>
<feature type="turn" evidence="7">
    <location>
        <begin position="323"/>
        <end position="325"/>
    </location>
</feature>
<feature type="helix" evidence="7">
    <location>
        <begin position="330"/>
        <end position="336"/>
    </location>
</feature>
<feature type="helix" evidence="7">
    <location>
        <begin position="390"/>
        <end position="455"/>
    </location>
</feature>